<protein>
    <recommendedName>
        <fullName evidence="1">Acetyl-coenzyme A carboxylase carboxyl transferase subunit alpha</fullName>
        <shortName evidence="1">ACCase subunit alpha</shortName>
        <shortName evidence="1">Acetyl-CoA carboxylase carboxyltransferase subunit alpha</shortName>
        <ecNumber evidence="1">2.1.3.15</ecNumber>
    </recommendedName>
</protein>
<comment type="function">
    <text evidence="1">Component of the acetyl coenzyme A carboxylase (ACC) complex. First, biotin carboxylase catalyzes the carboxylation of biotin on its carrier protein (BCCP) and then the CO(2) group is transferred by the carboxyltransferase to acetyl-CoA to form malonyl-CoA.</text>
</comment>
<comment type="catalytic activity">
    <reaction evidence="1">
        <text>N(6)-carboxybiotinyl-L-lysyl-[protein] + acetyl-CoA = N(6)-biotinyl-L-lysyl-[protein] + malonyl-CoA</text>
        <dbReference type="Rhea" id="RHEA:54728"/>
        <dbReference type="Rhea" id="RHEA-COMP:10505"/>
        <dbReference type="Rhea" id="RHEA-COMP:10506"/>
        <dbReference type="ChEBI" id="CHEBI:57288"/>
        <dbReference type="ChEBI" id="CHEBI:57384"/>
        <dbReference type="ChEBI" id="CHEBI:83144"/>
        <dbReference type="ChEBI" id="CHEBI:83145"/>
        <dbReference type="EC" id="2.1.3.15"/>
    </reaction>
</comment>
<comment type="pathway">
    <text evidence="1">Lipid metabolism; malonyl-CoA biosynthesis; malonyl-CoA from acetyl-CoA: step 1/1.</text>
</comment>
<comment type="subunit">
    <text evidence="1">Acetyl-CoA carboxylase is a heterohexamer composed of biotin carboxyl carrier protein (AccB), biotin carboxylase (AccC) and two subunits each of ACCase subunit alpha (AccA) and ACCase subunit beta (AccD).</text>
</comment>
<comment type="subcellular location">
    <subcellularLocation>
        <location evidence="1">Cytoplasm</location>
    </subcellularLocation>
</comment>
<comment type="similarity">
    <text evidence="1">Belongs to the AccA family.</text>
</comment>
<reference key="1">
    <citation type="journal article" date="2008" name="PLoS ONE">
        <title>Comparative analysis of Acinetobacters: three genomes for three lifestyles.</title>
        <authorList>
            <person name="Vallenet D."/>
            <person name="Nordmann P."/>
            <person name="Barbe V."/>
            <person name="Poirel L."/>
            <person name="Mangenot S."/>
            <person name="Bataille E."/>
            <person name="Dossat C."/>
            <person name="Gas S."/>
            <person name="Kreimeyer A."/>
            <person name="Lenoble P."/>
            <person name="Oztas S."/>
            <person name="Poulain J."/>
            <person name="Segurens B."/>
            <person name="Robert C."/>
            <person name="Abergel C."/>
            <person name="Claverie J.-M."/>
            <person name="Raoult D."/>
            <person name="Medigue C."/>
            <person name="Weissenbach J."/>
            <person name="Cruveiller S."/>
        </authorList>
    </citation>
    <scope>NUCLEOTIDE SEQUENCE [LARGE SCALE GENOMIC DNA]</scope>
    <source>
        <strain>AYE</strain>
    </source>
</reference>
<evidence type="ECO:0000255" key="1">
    <source>
        <dbReference type="HAMAP-Rule" id="MF_00823"/>
    </source>
</evidence>
<evidence type="ECO:0000255" key="2">
    <source>
        <dbReference type="PROSITE-ProRule" id="PRU01137"/>
    </source>
</evidence>
<keyword id="KW-0067">ATP-binding</keyword>
<keyword id="KW-0963">Cytoplasm</keyword>
<keyword id="KW-0275">Fatty acid biosynthesis</keyword>
<keyword id="KW-0276">Fatty acid metabolism</keyword>
<keyword id="KW-0444">Lipid biosynthesis</keyword>
<keyword id="KW-0443">Lipid metabolism</keyword>
<keyword id="KW-0547">Nucleotide-binding</keyword>
<keyword id="KW-0808">Transferase</keyword>
<proteinExistence type="inferred from homology"/>
<name>ACCA_ACIBY</name>
<sequence>MKKATQSKAWTTVQIARHPERPQFLDYVGEIFTEFDALHGDRLFGDDGAMVGGLARFDGQPVMVIGQHRGRSTREKLKHNFGMCNPEGYRKSQRLLDMAERFNLPVFTFIDTMGAYPGVGAEERGQAEAIATSLAQLSSLKVPVIATVLGEGGSGGALGIGVADRVIMLSHSIYSVISPEGCASILWKTAEKAAQASEALGLTADKLQSLGIVEYVVDEGEGAHLDPERVMQNLKVVLKQALDELLPMDANERCEARYQRLMKFGSENLGMAS</sequence>
<organism>
    <name type="scientific">Acinetobacter baumannii (strain AYE)</name>
    <dbReference type="NCBI Taxonomy" id="509173"/>
    <lineage>
        <taxon>Bacteria</taxon>
        <taxon>Pseudomonadati</taxon>
        <taxon>Pseudomonadota</taxon>
        <taxon>Gammaproteobacteria</taxon>
        <taxon>Moraxellales</taxon>
        <taxon>Moraxellaceae</taxon>
        <taxon>Acinetobacter</taxon>
        <taxon>Acinetobacter calcoaceticus/baumannii complex</taxon>
    </lineage>
</organism>
<dbReference type="EC" id="2.1.3.15" evidence="1"/>
<dbReference type="EMBL" id="CU459141">
    <property type="protein sequence ID" value="CAM87962.1"/>
    <property type="molecule type" value="Genomic_DNA"/>
</dbReference>
<dbReference type="RefSeq" id="WP_000710403.1">
    <property type="nucleotide sequence ID" value="NZ_JBDGFB010000020.1"/>
</dbReference>
<dbReference type="SMR" id="B0V5P9"/>
<dbReference type="EnsemblBacteria" id="CAM87962">
    <property type="protein sequence ID" value="CAM87962"/>
    <property type="gene ID" value="ABAYE3153"/>
</dbReference>
<dbReference type="KEGG" id="aby:ABAYE3153"/>
<dbReference type="HOGENOM" id="CLU_015486_0_2_6"/>
<dbReference type="UniPathway" id="UPA00655">
    <property type="reaction ID" value="UER00711"/>
</dbReference>
<dbReference type="GO" id="GO:0009317">
    <property type="term" value="C:acetyl-CoA carboxylase complex"/>
    <property type="evidence" value="ECO:0007669"/>
    <property type="project" value="InterPro"/>
</dbReference>
<dbReference type="GO" id="GO:0003989">
    <property type="term" value="F:acetyl-CoA carboxylase activity"/>
    <property type="evidence" value="ECO:0007669"/>
    <property type="project" value="InterPro"/>
</dbReference>
<dbReference type="GO" id="GO:0005524">
    <property type="term" value="F:ATP binding"/>
    <property type="evidence" value="ECO:0007669"/>
    <property type="project" value="UniProtKB-KW"/>
</dbReference>
<dbReference type="GO" id="GO:0016743">
    <property type="term" value="F:carboxyl- or carbamoyltransferase activity"/>
    <property type="evidence" value="ECO:0007669"/>
    <property type="project" value="UniProtKB-UniRule"/>
</dbReference>
<dbReference type="GO" id="GO:0006633">
    <property type="term" value="P:fatty acid biosynthetic process"/>
    <property type="evidence" value="ECO:0007669"/>
    <property type="project" value="UniProtKB-KW"/>
</dbReference>
<dbReference type="GO" id="GO:2001295">
    <property type="term" value="P:malonyl-CoA biosynthetic process"/>
    <property type="evidence" value="ECO:0007669"/>
    <property type="project" value="UniProtKB-UniRule"/>
</dbReference>
<dbReference type="Gene3D" id="3.90.226.10">
    <property type="entry name" value="2-enoyl-CoA Hydratase, Chain A, domain 1"/>
    <property type="match status" value="1"/>
</dbReference>
<dbReference type="HAMAP" id="MF_00823">
    <property type="entry name" value="AcetylCoA_CT_alpha"/>
    <property type="match status" value="1"/>
</dbReference>
<dbReference type="InterPro" id="IPR001095">
    <property type="entry name" value="Acetyl_CoA_COase_a_su"/>
</dbReference>
<dbReference type="InterPro" id="IPR029045">
    <property type="entry name" value="ClpP/crotonase-like_dom_sf"/>
</dbReference>
<dbReference type="InterPro" id="IPR011763">
    <property type="entry name" value="COA_CT_C"/>
</dbReference>
<dbReference type="NCBIfam" id="TIGR00513">
    <property type="entry name" value="accA"/>
    <property type="match status" value="1"/>
</dbReference>
<dbReference type="NCBIfam" id="NF041504">
    <property type="entry name" value="AccA_sub"/>
    <property type="match status" value="1"/>
</dbReference>
<dbReference type="NCBIfam" id="NF004344">
    <property type="entry name" value="PRK05724.1"/>
    <property type="match status" value="1"/>
</dbReference>
<dbReference type="PANTHER" id="PTHR42853">
    <property type="entry name" value="ACETYL-COENZYME A CARBOXYLASE CARBOXYL TRANSFERASE SUBUNIT ALPHA"/>
    <property type="match status" value="1"/>
</dbReference>
<dbReference type="PANTHER" id="PTHR42853:SF3">
    <property type="entry name" value="ACETYL-COENZYME A CARBOXYLASE CARBOXYL TRANSFERASE SUBUNIT ALPHA, CHLOROPLASTIC"/>
    <property type="match status" value="1"/>
</dbReference>
<dbReference type="Pfam" id="PF03255">
    <property type="entry name" value="ACCA"/>
    <property type="match status" value="1"/>
</dbReference>
<dbReference type="PRINTS" id="PR01069">
    <property type="entry name" value="ACCCTRFRASEA"/>
</dbReference>
<dbReference type="SUPFAM" id="SSF52096">
    <property type="entry name" value="ClpP/crotonase"/>
    <property type="match status" value="1"/>
</dbReference>
<dbReference type="PROSITE" id="PS50989">
    <property type="entry name" value="COA_CT_CTER"/>
    <property type="match status" value="1"/>
</dbReference>
<accession>B0V5P9</accession>
<gene>
    <name evidence="1" type="primary">accA</name>
    <name type="ordered locus">ABAYE3153</name>
</gene>
<feature type="chain" id="PRO_1000148725" description="Acetyl-coenzyme A carboxylase carboxyl transferase subunit alpha">
    <location>
        <begin position="1"/>
        <end position="273"/>
    </location>
</feature>
<feature type="domain" description="CoA carboxyltransferase C-terminal" evidence="2">
    <location>
        <begin position="1"/>
        <end position="244"/>
    </location>
</feature>